<evidence type="ECO:0000255" key="1">
    <source>
        <dbReference type="HAMAP-Rule" id="MF_01618"/>
    </source>
</evidence>
<gene>
    <name evidence="1" type="primary">fadI</name>
    <name type="ordered locus">YE1276</name>
</gene>
<proteinExistence type="inferred from homology"/>
<reference key="1">
    <citation type="journal article" date="2006" name="PLoS Genet.">
        <title>The complete genome sequence and comparative genome analysis of the high pathogenicity Yersinia enterocolitica strain 8081.</title>
        <authorList>
            <person name="Thomson N.R."/>
            <person name="Howard S."/>
            <person name="Wren B.W."/>
            <person name="Holden M.T.G."/>
            <person name="Crossman L."/>
            <person name="Challis G.L."/>
            <person name="Churcher C."/>
            <person name="Mungall K."/>
            <person name="Brooks K."/>
            <person name="Chillingworth T."/>
            <person name="Feltwell T."/>
            <person name="Abdellah Z."/>
            <person name="Hauser H."/>
            <person name="Jagels K."/>
            <person name="Maddison M."/>
            <person name="Moule S."/>
            <person name="Sanders M."/>
            <person name="Whitehead S."/>
            <person name="Quail M.A."/>
            <person name="Dougan G."/>
            <person name="Parkhill J."/>
            <person name="Prentice M.B."/>
        </authorList>
    </citation>
    <scope>NUCLEOTIDE SEQUENCE [LARGE SCALE GENOMIC DNA]</scope>
    <source>
        <strain>NCTC 13174 / 8081</strain>
    </source>
</reference>
<feature type="chain" id="PRO_1000069521" description="3-ketoacyl-CoA thiolase">
    <location>
        <begin position="1"/>
        <end position="436"/>
    </location>
</feature>
<feature type="active site" description="Acyl-thioester intermediate" evidence="1">
    <location>
        <position position="99"/>
    </location>
</feature>
<feature type="active site" description="Proton acceptor" evidence="1">
    <location>
        <position position="392"/>
    </location>
</feature>
<feature type="active site" description="Proton acceptor" evidence="1">
    <location>
        <position position="422"/>
    </location>
</feature>
<name>FADI_YERE8</name>
<keyword id="KW-0012">Acyltransferase</keyword>
<keyword id="KW-0963">Cytoplasm</keyword>
<keyword id="KW-0276">Fatty acid metabolism</keyword>
<keyword id="KW-0442">Lipid degradation</keyword>
<keyword id="KW-0443">Lipid metabolism</keyword>
<keyword id="KW-0808">Transferase</keyword>
<organism>
    <name type="scientific">Yersinia enterocolitica serotype O:8 / biotype 1B (strain NCTC 13174 / 8081)</name>
    <dbReference type="NCBI Taxonomy" id="393305"/>
    <lineage>
        <taxon>Bacteria</taxon>
        <taxon>Pseudomonadati</taxon>
        <taxon>Pseudomonadota</taxon>
        <taxon>Gammaproteobacteria</taxon>
        <taxon>Enterobacterales</taxon>
        <taxon>Yersiniaceae</taxon>
        <taxon>Yersinia</taxon>
    </lineage>
</organism>
<sequence length="436" mass="46237">MSKPLPLVTRQGDRIAIVSGLRTPFAKQATAYHGVPAVDLGKIVVSELLARSGVAPELIDQLVFGQVVQMPEAPNIAREIVLGTGMSVHTDAYSVSRACATSFQAVANVAESIIAGSVTVAIAGGADSSSVLPIGVSKALARTLVDVNKARTLSQRLKLFSRLKLRDLLPVAPAVAEYSTGLRMGDTAEQMAKTYGISRQDQDALALRSHQMAAQAWQQGLLHDEVMTAYIPPFSDAITEDNNIRKDSTMEQYAKLRPAFDRKHGSVTAANSTPLTDGAAAVMMMSESKAKELGLQPLGYLRSFAFSAIDVWQDMLLGPSYATPLALDRAGITLADLTLIDMHEAFAAQTLANLKMFASDSFAREKLGRSQAIGEVDMSKFNVLGGSIAYGHPFAATGARMITQTLNELRRRGGGLGLTTACAAGGLGAAMIVEVE</sequence>
<accession>A1JK23</accession>
<dbReference type="EC" id="2.3.1.16" evidence="1"/>
<dbReference type="EMBL" id="AM286415">
    <property type="protein sequence ID" value="CAL11368.1"/>
    <property type="molecule type" value="Genomic_DNA"/>
</dbReference>
<dbReference type="RefSeq" id="WP_011815905.1">
    <property type="nucleotide sequence ID" value="NC_008800.1"/>
</dbReference>
<dbReference type="RefSeq" id="YP_001005597.1">
    <property type="nucleotide sequence ID" value="NC_008800.1"/>
</dbReference>
<dbReference type="SMR" id="A1JK23"/>
<dbReference type="KEGG" id="yen:YE1276"/>
<dbReference type="PATRIC" id="fig|393305.7.peg.1386"/>
<dbReference type="eggNOG" id="COG0183">
    <property type="taxonomic scope" value="Bacteria"/>
</dbReference>
<dbReference type="HOGENOM" id="CLU_031026_2_0_6"/>
<dbReference type="OrthoDB" id="8951704at2"/>
<dbReference type="UniPathway" id="UPA00659"/>
<dbReference type="Proteomes" id="UP000000642">
    <property type="component" value="Chromosome"/>
</dbReference>
<dbReference type="GO" id="GO:0005829">
    <property type="term" value="C:cytosol"/>
    <property type="evidence" value="ECO:0007669"/>
    <property type="project" value="TreeGrafter"/>
</dbReference>
<dbReference type="GO" id="GO:0003988">
    <property type="term" value="F:acetyl-CoA C-acyltransferase activity"/>
    <property type="evidence" value="ECO:0007669"/>
    <property type="project" value="UniProtKB-UniRule"/>
</dbReference>
<dbReference type="GO" id="GO:0006635">
    <property type="term" value="P:fatty acid beta-oxidation"/>
    <property type="evidence" value="ECO:0007669"/>
    <property type="project" value="UniProtKB-UniRule"/>
</dbReference>
<dbReference type="CDD" id="cd00751">
    <property type="entry name" value="thiolase"/>
    <property type="match status" value="1"/>
</dbReference>
<dbReference type="FunFam" id="3.40.47.10:FF:000011">
    <property type="entry name" value="3-ketoacyl-CoA thiolase"/>
    <property type="match status" value="1"/>
</dbReference>
<dbReference type="Gene3D" id="3.40.47.10">
    <property type="match status" value="1"/>
</dbReference>
<dbReference type="HAMAP" id="MF_01618">
    <property type="entry name" value="FadI"/>
    <property type="match status" value="1"/>
</dbReference>
<dbReference type="InterPro" id="IPR012806">
    <property type="entry name" value="Ac-CoA_C-AcTrfase_FadI"/>
</dbReference>
<dbReference type="InterPro" id="IPR002155">
    <property type="entry name" value="Thiolase"/>
</dbReference>
<dbReference type="InterPro" id="IPR016039">
    <property type="entry name" value="Thiolase-like"/>
</dbReference>
<dbReference type="InterPro" id="IPR020615">
    <property type="entry name" value="Thiolase_acyl_enz_int_AS"/>
</dbReference>
<dbReference type="InterPro" id="IPR020610">
    <property type="entry name" value="Thiolase_AS"/>
</dbReference>
<dbReference type="InterPro" id="IPR020617">
    <property type="entry name" value="Thiolase_C"/>
</dbReference>
<dbReference type="InterPro" id="IPR020613">
    <property type="entry name" value="Thiolase_CS"/>
</dbReference>
<dbReference type="InterPro" id="IPR020616">
    <property type="entry name" value="Thiolase_N"/>
</dbReference>
<dbReference type="NCBIfam" id="TIGR01930">
    <property type="entry name" value="AcCoA-C-Actrans"/>
    <property type="match status" value="1"/>
</dbReference>
<dbReference type="NCBIfam" id="TIGR02446">
    <property type="entry name" value="FadI"/>
    <property type="match status" value="1"/>
</dbReference>
<dbReference type="NCBIfam" id="NF006516">
    <property type="entry name" value="PRK08963.1"/>
    <property type="match status" value="1"/>
</dbReference>
<dbReference type="PANTHER" id="PTHR18919:SF107">
    <property type="entry name" value="ACETYL-COA ACETYLTRANSFERASE, CYTOSOLIC"/>
    <property type="match status" value="1"/>
</dbReference>
<dbReference type="PANTHER" id="PTHR18919">
    <property type="entry name" value="ACETYL-COA C-ACYLTRANSFERASE"/>
    <property type="match status" value="1"/>
</dbReference>
<dbReference type="Pfam" id="PF02803">
    <property type="entry name" value="Thiolase_C"/>
    <property type="match status" value="1"/>
</dbReference>
<dbReference type="Pfam" id="PF00108">
    <property type="entry name" value="Thiolase_N"/>
    <property type="match status" value="1"/>
</dbReference>
<dbReference type="PIRSF" id="PIRSF000429">
    <property type="entry name" value="Ac-CoA_Ac_transf"/>
    <property type="match status" value="1"/>
</dbReference>
<dbReference type="SUPFAM" id="SSF53901">
    <property type="entry name" value="Thiolase-like"/>
    <property type="match status" value="2"/>
</dbReference>
<dbReference type="PROSITE" id="PS00098">
    <property type="entry name" value="THIOLASE_1"/>
    <property type="match status" value="1"/>
</dbReference>
<dbReference type="PROSITE" id="PS00737">
    <property type="entry name" value="THIOLASE_2"/>
    <property type="match status" value="1"/>
</dbReference>
<dbReference type="PROSITE" id="PS00099">
    <property type="entry name" value="THIOLASE_3"/>
    <property type="match status" value="1"/>
</dbReference>
<protein>
    <recommendedName>
        <fullName evidence="1">3-ketoacyl-CoA thiolase</fullName>
        <ecNumber evidence="1">2.3.1.16</ecNumber>
    </recommendedName>
    <alternativeName>
        <fullName evidence="1">ACSs</fullName>
    </alternativeName>
    <alternativeName>
        <fullName evidence="1">Acetyl-CoA acyltransferase</fullName>
    </alternativeName>
    <alternativeName>
        <fullName evidence="1">Acyl-CoA ligase</fullName>
    </alternativeName>
    <alternativeName>
        <fullName evidence="1">Beta-ketothiolase</fullName>
    </alternativeName>
    <alternativeName>
        <fullName evidence="1">Fatty acid oxidation complex subunit beta</fullName>
    </alternativeName>
</protein>
<comment type="function">
    <text evidence="1">Catalyzes the final step of fatty acid oxidation in which acetyl-CoA is released and the CoA ester of a fatty acid two carbons shorter is formed.</text>
</comment>
<comment type="catalytic activity">
    <reaction evidence="1">
        <text>an acyl-CoA + acetyl-CoA = a 3-oxoacyl-CoA + CoA</text>
        <dbReference type="Rhea" id="RHEA:21564"/>
        <dbReference type="ChEBI" id="CHEBI:57287"/>
        <dbReference type="ChEBI" id="CHEBI:57288"/>
        <dbReference type="ChEBI" id="CHEBI:58342"/>
        <dbReference type="ChEBI" id="CHEBI:90726"/>
        <dbReference type="EC" id="2.3.1.16"/>
    </reaction>
</comment>
<comment type="pathway">
    <text evidence="1">Lipid metabolism; fatty acid beta-oxidation.</text>
</comment>
<comment type="subunit">
    <text evidence="1">Heterotetramer of two alpha chains (FadJ) and two beta chains (FadI).</text>
</comment>
<comment type="subcellular location">
    <subcellularLocation>
        <location evidence="1">Cytoplasm</location>
    </subcellularLocation>
</comment>
<comment type="similarity">
    <text evidence="1">Belongs to the thiolase-like superfamily. Thiolase family.</text>
</comment>